<sequence length="182" mass="20180">MSVQPETMPDSSNKTNPTVKEVIAYLADKFPLCFSIEGEAKPLKVGLSQDLAEALADDEKVSKTLLRQVLRSYTMSWRYLACCKANAQRIGLQGENVGIVDEAQAEHAAQSLAVAKEAYAARKAEQRKEQRKDFFKKKAREERNAKTMNKAVKKGSPKKDTFAKATAESLAVLTHKFSKGNK</sequence>
<gene>
    <name evidence="1" type="primary">proQ</name>
    <name type="ordered locus">HD_1009</name>
</gene>
<feature type="chain" id="PRO_0000214617" description="RNA chaperone ProQ">
    <location>
        <begin position="1"/>
        <end position="182"/>
    </location>
</feature>
<feature type="region of interest" description="Disordered" evidence="2">
    <location>
        <begin position="125"/>
        <end position="160"/>
    </location>
</feature>
<protein>
    <recommendedName>
        <fullName evidence="1">RNA chaperone ProQ</fullName>
    </recommendedName>
</protein>
<comment type="function">
    <text evidence="1">RNA chaperone with significant RNA binding, RNA strand exchange and RNA duplexing activities.</text>
</comment>
<comment type="subcellular location">
    <subcellularLocation>
        <location evidence="1">Cytoplasm</location>
    </subcellularLocation>
</comment>
<comment type="similarity">
    <text evidence="1">Belongs to the ProQ family.</text>
</comment>
<name>PROQ_HAEDU</name>
<organism>
    <name type="scientific">Haemophilus ducreyi (strain 35000HP / ATCC 700724)</name>
    <dbReference type="NCBI Taxonomy" id="233412"/>
    <lineage>
        <taxon>Bacteria</taxon>
        <taxon>Pseudomonadati</taxon>
        <taxon>Pseudomonadota</taxon>
        <taxon>Gammaproteobacteria</taxon>
        <taxon>Pasteurellales</taxon>
        <taxon>Pasteurellaceae</taxon>
        <taxon>Haemophilus</taxon>
    </lineage>
</organism>
<keyword id="KW-0143">Chaperone</keyword>
<keyword id="KW-0963">Cytoplasm</keyword>
<keyword id="KW-1185">Reference proteome</keyword>
<keyword id="KW-0694">RNA-binding</keyword>
<evidence type="ECO:0000255" key="1">
    <source>
        <dbReference type="HAMAP-Rule" id="MF_00749"/>
    </source>
</evidence>
<evidence type="ECO:0000256" key="2">
    <source>
        <dbReference type="SAM" id="MobiDB-lite"/>
    </source>
</evidence>
<reference key="1">
    <citation type="submission" date="2003-06" db="EMBL/GenBank/DDBJ databases">
        <title>The complete genome sequence of Haemophilus ducreyi.</title>
        <authorList>
            <person name="Munson R.S. Jr."/>
            <person name="Ray W.C."/>
            <person name="Mahairas G."/>
            <person name="Sabo P."/>
            <person name="Mungur R."/>
            <person name="Johnson L."/>
            <person name="Nguyen D."/>
            <person name="Wang J."/>
            <person name="Forst C."/>
            <person name="Hood L."/>
        </authorList>
    </citation>
    <scope>NUCLEOTIDE SEQUENCE [LARGE SCALE GENOMIC DNA]</scope>
    <source>
        <strain>35000HP / ATCC 700724</strain>
    </source>
</reference>
<proteinExistence type="inferred from homology"/>
<dbReference type="EMBL" id="AE017143">
    <property type="protein sequence ID" value="AAP95888.1"/>
    <property type="molecule type" value="Genomic_DNA"/>
</dbReference>
<dbReference type="RefSeq" id="WP_010944938.1">
    <property type="nucleotide sequence ID" value="NC_002940.2"/>
</dbReference>
<dbReference type="SMR" id="Q7VMG8"/>
<dbReference type="STRING" id="233412.HD_1009"/>
<dbReference type="DNASU" id="1490949"/>
<dbReference type="KEGG" id="hdu:HD_1009"/>
<dbReference type="eggNOG" id="COG3109">
    <property type="taxonomic scope" value="Bacteria"/>
</dbReference>
<dbReference type="HOGENOM" id="CLU_123900_0_0_6"/>
<dbReference type="OrthoDB" id="8421419at2"/>
<dbReference type="Proteomes" id="UP000001022">
    <property type="component" value="Chromosome"/>
</dbReference>
<dbReference type="GO" id="GO:0005829">
    <property type="term" value="C:cytosol"/>
    <property type="evidence" value="ECO:0007669"/>
    <property type="project" value="TreeGrafter"/>
</dbReference>
<dbReference type="GO" id="GO:0033592">
    <property type="term" value="F:RNA strand annealing activity"/>
    <property type="evidence" value="ECO:0007669"/>
    <property type="project" value="UniProtKB-UniRule"/>
</dbReference>
<dbReference type="GO" id="GO:0034057">
    <property type="term" value="F:RNA strand-exchange activity"/>
    <property type="evidence" value="ECO:0007669"/>
    <property type="project" value="UniProtKB-UniRule"/>
</dbReference>
<dbReference type="GO" id="GO:0010608">
    <property type="term" value="P:post-transcriptional regulation of gene expression"/>
    <property type="evidence" value="ECO:0007669"/>
    <property type="project" value="InterPro"/>
</dbReference>
<dbReference type="Gene3D" id="1.10.1710.10">
    <property type="entry name" value="ProQ/FinO domain"/>
    <property type="match status" value="1"/>
</dbReference>
<dbReference type="HAMAP" id="MF_00749">
    <property type="entry name" value="ProQ"/>
    <property type="match status" value="1"/>
</dbReference>
<dbReference type="InterPro" id="IPR023529">
    <property type="entry name" value="ProQ"/>
</dbReference>
<dbReference type="InterPro" id="IPR016103">
    <property type="entry name" value="ProQ/FinO"/>
</dbReference>
<dbReference type="InterPro" id="IPR036442">
    <property type="entry name" value="ProQ/FinO_sf"/>
</dbReference>
<dbReference type="NCBIfam" id="NF003434">
    <property type="entry name" value="PRK04950.1"/>
    <property type="match status" value="1"/>
</dbReference>
<dbReference type="PANTHER" id="PTHR38106">
    <property type="entry name" value="RNA CHAPERONE PROQ"/>
    <property type="match status" value="1"/>
</dbReference>
<dbReference type="PANTHER" id="PTHR38106:SF1">
    <property type="entry name" value="RNA CHAPERONE PROQ"/>
    <property type="match status" value="1"/>
</dbReference>
<dbReference type="Pfam" id="PF04352">
    <property type="entry name" value="ProQ"/>
    <property type="match status" value="1"/>
</dbReference>
<dbReference type="SMART" id="SM00945">
    <property type="entry name" value="ProQ"/>
    <property type="match status" value="1"/>
</dbReference>
<dbReference type="SUPFAM" id="SSF48657">
    <property type="entry name" value="FinO-like"/>
    <property type="match status" value="1"/>
</dbReference>
<accession>Q7VMG8</accession>